<dbReference type="EMBL" id="AL123456">
    <property type="protein sequence ID" value="CCP45699.1"/>
    <property type="molecule type" value="Genomic_DNA"/>
</dbReference>
<dbReference type="PIR" id="D70926">
    <property type="entry name" value="D70926"/>
</dbReference>
<dbReference type="RefSeq" id="NP_217413.1">
    <property type="nucleotide sequence ID" value="NC_000962.3"/>
</dbReference>
<dbReference type="RefSeq" id="WP_003414700.1">
    <property type="nucleotide sequence ID" value="NZ_NVQJ01000006.1"/>
</dbReference>
<dbReference type="SMR" id="P9WPR1"/>
<dbReference type="FunCoup" id="P9WPR1">
    <property type="interactions" value="20"/>
</dbReference>
<dbReference type="STRING" id="83332.Rv2897c"/>
<dbReference type="PaxDb" id="83332-Rv2897c"/>
<dbReference type="DNASU" id="888212"/>
<dbReference type="GeneID" id="888212"/>
<dbReference type="KEGG" id="mtu:Rv2897c"/>
<dbReference type="KEGG" id="mtv:RVBD_2897c"/>
<dbReference type="TubercuList" id="Rv2897c"/>
<dbReference type="eggNOG" id="COG0606">
    <property type="taxonomic scope" value="Bacteria"/>
</dbReference>
<dbReference type="InParanoid" id="P9WPR1"/>
<dbReference type="OrthoDB" id="9813147at2"/>
<dbReference type="PhylomeDB" id="P9WPR1"/>
<dbReference type="Proteomes" id="UP000001584">
    <property type="component" value="Chromosome"/>
</dbReference>
<dbReference type="GO" id="GO:0005886">
    <property type="term" value="C:plasma membrane"/>
    <property type="evidence" value="ECO:0007005"/>
    <property type="project" value="MTBBASE"/>
</dbReference>
<dbReference type="GO" id="GO:0005524">
    <property type="term" value="F:ATP binding"/>
    <property type="evidence" value="ECO:0007669"/>
    <property type="project" value="InterPro"/>
</dbReference>
<dbReference type="GO" id="GO:0016887">
    <property type="term" value="F:ATP hydrolysis activity"/>
    <property type="evidence" value="ECO:0007669"/>
    <property type="project" value="InterPro"/>
</dbReference>
<dbReference type="CDD" id="cd00009">
    <property type="entry name" value="AAA"/>
    <property type="match status" value="1"/>
</dbReference>
<dbReference type="FunFam" id="3.30.230.10:FF:000048">
    <property type="entry name" value="AAA family ATPase"/>
    <property type="match status" value="1"/>
</dbReference>
<dbReference type="FunFam" id="3.40.50.300:FF:001969">
    <property type="entry name" value="Putative magnesium chelatase"/>
    <property type="match status" value="1"/>
</dbReference>
<dbReference type="Gene3D" id="3.30.230.10">
    <property type="match status" value="1"/>
</dbReference>
<dbReference type="Gene3D" id="3.40.50.300">
    <property type="entry name" value="P-loop containing nucleotide triphosphate hydrolases"/>
    <property type="match status" value="1"/>
</dbReference>
<dbReference type="InterPro" id="IPR003593">
    <property type="entry name" value="AAA+_ATPase"/>
</dbReference>
<dbReference type="InterPro" id="IPR045006">
    <property type="entry name" value="CHLI-like"/>
</dbReference>
<dbReference type="InterPro" id="IPR004482">
    <property type="entry name" value="Mg_chelat-rel"/>
</dbReference>
<dbReference type="InterPro" id="IPR025158">
    <property type="entry name" value="Mg_chelat-rel_C"/>
</dbReference>
<dbReference type="InterPro" id="IPR000523">
    <property type="entry name" value="Mg_chelatse_chII-like_cat_dom"/>
</dbReference>
<dbReference type="InterPro" id="IPR027417">
    <property type="entry name" value="P-loop_NTPase"/>
</dbReference>
<dbReference type="InterPro" id="IPR020568">
    <property type="entry name" value="Ribosomal_Su5_D2-typ_SF"/>
</dbReference>
<dbReference type="InterPro" id="IPR014721">
    <property type="entry name" value="Ribsml_uS5_D2-typ_fold_subgr"/>
</dbReference>
<dbReference type="NCBIfam" id="TIGR00368">
    <property type="entry name" value="YifB family Mg chelatase-like AAA ATPase"/>
    <property type="match status" value="1"/>
</dbReference>
<dbReference type="PANTHER" id="PTHR32039:SF7">
    <property type="entry name" value="COMPETENCE PROTEIN COMM"/>
    <property type="match status" value="1"/>
</dbReference>
<dbReference type="PANTHER" id="PTHR32039">
    <property type="entry name" value="MAGNESIUM-CHELATASE SUBUNIT CHLI"/>
    <property type="match status" value="1"/>
</dbReference>
<dbReference type="Pfam" id="PF13541">
    <property type="entry name" value="ChlI"/>
    <property type="match status" value="1"/>
</dbReference>
<dbReference type="Pfam" id="PF01078">
    <property type="entry name" value="Mg_chelatase"/>
    <property type="match status" value="1"/>
</dbReference>
<dbReference type="Pfam" id="PF13335">
    <property type="entry name" value="Mg_chelatase_C"/>
    <property type="match status" value="1"/>
</dbReference>
<dbReference type="SMART" id="SM00382">
    <property type="entry name" value="AAA"/>
    <property type="match status" value="1"/>
</dbReference>
<dbReference type="SUPFAM" id="SSF52540">
    <property type="entry name" value="P-loop containing nucleoside triphosphate hydrolases"/>
    <property type="match status" value="1"/>
</dbReference>
<dbReference type="SUPFAM" id="SSF54211">
    <property type="entry name" value="Ribosomal protein S5 domain 2-like"/>
    <property type="match status" value="1"/>
</dbReference>
<reference key="1">
    <citation type="journal article" date="1998" name="Nature">
        <title>Deciphering the biology of Mycobacterium tuberculosis from the complete genome sequence.</title>
        <authorList>
            <person name="Cole S.T."/>
            <person name="Brosch R."/>
            <person name="Parkhill J."/>
            <person name="Garnier T."/>
            <person name="Churcher C.M."/>
            <person name="Harris D.E."/>
            <person name="Gordon S.V."/>
            <person name="Eiglmeier K."/>
            <person name="Gas S."/>
            <person name="Barry C.E. III"/>
            <person name="Tekaia F."/>
            <person name="Badcock K."/>
            <person name="Basham D."/>
            <person name="Brown D."/>
            <person name="Chillingworth T."/>
            <person name="Connor R."/>
            <person name="Davies R.M."/>
            <person name="Devlin K."/>
            <person name="Feltwell T."/>
            <person name="Gentles S."/>
            <person name="Hamlin N."/>
            <person name="Holroyd S."/>
            <person name="Hornsby T."/>
            <person name="Jagels K."/>
            <person name="Krogh A."/>
            <person name="McLean J."/>
            <person name="Moule S."/>
            <person name="Murphy L.D."/>
            <person name="Oliver S."/>
            <person name="Osborne J."/>
            <person name="Quail M.A."/>
            <person name="Rajandream M.A."/>
            <person name="Rogers J."/>
            <person name="Rutter S."/>
            <person name="Seeger K."/>
            <person name="Skelton S."/>
            <person name="Squares S."/>
            <person name="Squares R."/>
            <person name="Sulston J.E."/>
            <person name="Taylor K."/>
            <person name="Whitehead S."/>
            <person name="Barrell B.G."/>
        </authorList>
    </citation>
    <scope>NUCLEOTIDE SEQUENCE [LARGE SCALE GENOMIC DNA]</scope>
    <source>
        <strain>ATCC 25618 / H37Rv</strain>
    </source>
</reference>
<reference key="2">
    <citation type="journal article" date="2008" name="BMC Syst. Biol.">
        <title>targetTB: a target identification pipeline for Mycobacterium tuberculosis through an interactome, reactome and genome-scale structural analysis.</title>
        <authorList>
            <person name="Raman K."/>
            <person name="Yeturu K."/>
            <person name="Chandra N."/>
        </authorList>
    </citation>
    <scope>IDENTIFICATION AS A DRUG TARGET [LARGE SCALE ANALYSIS]</scope>
</reference>
<proteinExistence type="inferred from homology"/>
<evidence type="ECO:0000305" key="1"/>
<feature type="chain" id="PRO_0000206880" description="Uncharacterized protein Rv2897c">
    <location>
        <begin position="1"/>
        <end position="503"/>
    </location>
</feature>
<name>Y2897_MYCTU</name>
<organism>
    <name type="scientific">Mycobacterium tuberculosis (strain ATCC 25618 / H37Rv)</name>
    <dbReference type="NCBI Taxonomy" id="83332"/>
    <lineage>
        <taxon>Bacteria</taxon>
        <taxon>Bacillati</taxon>
        <taxon>Actinomycetota</taxon>
        <taxon>Actinomycetes</taxon>
        <taxon>Mycobacteriales</taxon>
        <taxon>Mycobacteriaceae</taxon>
        <taxon>Mycobacterium</taxon>
        <taxon>Mycobacterium tuberculosis complex</taxon>
    </lineage>
</organism>
<keyword id="KW-1185">Reference proteome</keyword>
<comment type="miscellaneous">
    <text>Was identified as a high-confidence drug target.</text>
</comment>
<comment type="similarity">
    <text evidence="1">Belongs to the Mg-chelatase subunits D/I family. ComM subfamily.</text>
</comment>
<sequence length="503" mass="52913">MALGRAFSVAVRGLDGEIVEIEADITSGLPGVHLVGLPDAALQESRDRVRAAVTNCGNSWPMARLTLALSPATLPKMGSVYDIALAAAVLSAQQKKPWERLENTLLLGELSLDGRVRPVRGVLPAVLAAKRDGWPAVVVPADNLPEASLVDGIDVRGVRTLGQLQSWLRGSTGLAGRITTADTTPESAADLADVVGQSQARFAVEVAAAGAHHLMLTGPPGVGKTMLAQRLPGLLPSLSGSESLEVTAIHSVAGLLSGDTPLITRPPFVAPHHSSSVAALVGGGSGMARPGAVSRAHRGVLFLDECAEISLSALEALRTPLEDGEIRLARRDGVACYPARFQLVLAANPCPCAPADPQDCICAAATKRRYLGKLSGPLLDRVDLRVQMHRLRAGAFSAADGESTSQVRQRVALAREAAAQRWRPHGFRTNAEVSGPLLRRKFRPSSAAMLPLRTALDRGLLSIRGVDRTLRVAWSLADLAGRTSPGIDEVAAALSFRQTGARR</sequence>
<accession>P9WPR1</accession>
<accession>L0TCK1</accession>
<accession>P68909</accession>
<accession>Q10818</accession>
<gene>
    <name type="ordered locus">Rv2897c</name>
    <name type="ORF">MTCY274.28c</name>
</gene>
<protein>
    <recommendedName>
        <fullName>Uncharacterized protein Rv2897c</fullName>
    </recommendedName>
</protein>